<organism>
    <name type="scientific">Mycobacterium bovis (strain BCG / Tokyo 172 / ATCC 35737 / TMC 1019)</name>
    <dbReference type="NCBI Taxonomy" id="561275"/>
    <lineage>
        <taxon>Bacteria</taxon>
        <taxon>Bacillati</taxon>
        <taxon>Actinomycetota</taxon>
        <taxon>Actinomycetes</taxon>
        <taxon>Mycobacteriales</taxon>
        <taxon>Mycobacteriaceae</taxon>
        <taxon>Mycobacterium</taxon>
        <taxon>Mycobacterium tuberculosis complex</taxon>
    </lineage>
</organism>
<dbReference type="EC" id="2.1.1.148" evidence="1"/>
<dbReference type="EMBL" id="AP010918">
    <property type="protein sequence ID" value="BAH27045.1"/>
    <property type="molecule type" value="Genomic_DNA"/>
</dbReference>
<dbReference type="RefSeq" id="WP_003899465.1">
    <property type="nucleotide sequence ID" value="NZ_CP014566.1"/>
</dbReference>
<dbReference type="SMR" id="C1AFL6"/>
<dbReference type="KEGG" id="mbt:JTY_2764"/>
<dbReference type="HOGENOM" id="CLU_077585_1_0_11"/>
<dbReference type="UniPathway" id="UPA00575"/>
<dbReference type="GO" id="GO:0050660">
    <property type="term" value="F:flavin adenine dinucleotide binding"/>
    <property type="evidence" value="ECO:0007669"/>
    <property type="project" value="InterPro"/>
</dbReference>
<dbReference type="GO" id="GO:0070402">
    <property type="term" value="F:NADPH binding"/>
    <property type="evidence" value="ECO:0007669"/>
    <property type="project" value="TreeGrafter"/>
</dbReference>
<dbReference type="GO" id="GO:0050797">
    <property type="term" value="F:thymidylate synthase (FAD) activity"/>
    <property type="evidence" value="ECO:0007669"/>
    <property type="project" value="UniProtKB-UniRule"/>
</dbReference>
<dbReference type="GO" id="GO:0004799">
    <property type="term" value="F:thymidylate synthase activity"/>
    <property type="evidence" value="ECO:0007669"/>
    <property type="project" value="TreeGrafter"/>
</dbReference>
<dbReference type="GO" id="GO:0006231">
    <property type="term" value="P:dTMP biosynthetic process"/>
    <property type="evidence" value="ECO:0007669"/>
    <property type="project" value="UniProtKB-UniRule"/>
</dbReference>
<dbReference type="GO" id="GO:0006235">
    <property type="term" value="P:dTTP biosynthetic process"/>
    <property type="evidence" value="ECO:0007669"/>
    <property type="project" value="UniProtKB-UniRule"/>
</dbReference>
<dbReference type="GO" id="GO:0032259">
    <property type="term" value="P:methylation"/>
    <property type="evidence" value="ECO:0007669"/>
    <property type="project" value="UniProtKB-KW"/>
</dbReference>
<dbReference type="CDD" id="cd20175">
    <property type="entry name" value="ThyX"/>
    <property type="match status" value="1"/>
</dbReference>
<dbReference type="Gene3D" id="3.30.1360.170">
    <property type="match status" value="1"/>
</dbReference>
<dbReference type="HAMAP" id="MF_01408">
    <property type="entry name" value="ThyX"/>
    <property type="match status" value="1"/>
</dbReference>
<dbReference type="InterPro" id="IPR003669">
    <property type="entry name" value="Thymidylate_synthase_ThyX"/>
</dbReference>
<dbReference type="InterPro" id="IPR036098">
    <property type="entry name" value="Thymidylate_synthase_ThyX_sf"/>
</dbReference>
<dbReference type="NCBIfam" id="TIGR02170">
    <property type="entry name" value="thyX"/>
    <property type="match status" value="1"/>
</dbReference>
<dbReference type="PANTHER" id="PTHR34934">
    <property type="entry name" value="FLAVIN-DEPENDENT THYMIDYLATE SYNTHASE"/>
    <property type="match status" value="1"/>
</dbReference>
<dbReference type="PANTHER" id="PTHR34934:SF1">
    <property type="entry name" value="FLAVIN-DEPENDENT THYMIDYLATE SYNTHASE"/>
    <property type="match status" value="1"/>
</dbReference>
<dbReference type="Pfam" id="PF02511">
    <property type="entry name" value="Thy1"/>
    <property type="match status" value="1"/>
</dbReference>
<dbReference type="SUPFAM" id="SSF69796">
    <property type="entry name" value="Thymidylate synthase-complementing protein Thy1"/>
    <property type="match status" value="1"/>
</dbReference>
<dbReference type="PROSITE" id="PS51331">
    <property type="entry name" value="THYX"/>
    <property type="match status" value="1"/>
</dbReference>
<sequence length="250" mass="27591">MAETAPLRVQLIAKTDFLAPPDVPWTTDADGGPALVEFAGRACYQSWSKPNPKTATNAGYLRHIIDVGHFSVLEHASVSFYITGISRSCTHELIRHRHFSYSQLSQRYVPEKDSRVVVPPGMEDDADLRHILTEAADAARATYSELLAKLEAKFADQPNAILRRKQARQAARAVLPNATETRIVVTGNYRAWRHFIAMRASEHADVEIRRLAIECLRQLAAVAPAVFADFEVTTLADGTEVATSPLATEA</sequence>
<feature type="chain" id="PRO_1000184591" description="Flavin-dependent thymidylate synthase">
    <location>
        <begin position="1"/>
        <end position="250"/>
    </location>
</feature>
<feature type="domain" description="ThyX" evidence="2">
    <location>
        <begin position="7"/>
        <end position="233"/>
    </location>
</feature>
<feature type="short sequence motif" description="ThyX motif" evidence="1">
    <location>
        <begin position="95"/>
        <end position="105"/>
    </location>
</feature>
<feature type="active site" description="Involved in ionization of N3 of dUMP, leading to its activation" evidence="1">
    <location>
        <position position="199"/>
    </location>
</feature>
<feature type="binding site" evidence="1">
    <location>
        <position position="71"/>
    </location>
    <ligand>
        <name>FAD</name>
        <dbReference type="ChEBI" id="CHEBI:57692"/>
        <note>ligand shared between neighboring subunits</note>
    </ligand>
</feature>
<feature type="binding site" evidence="1">
    <location>
        <begin position="92"/>
        <end position="95"/>
    </location>
    <ligand>
        <name>dUMP</name>
        <dbReference type="ChEBI" id="CHEBI:246422"/>
        <note>ligand shared between dimeric partners</note>
    </ligand>
</feature>
<feature type="binding site" evidence="1">
    <location>
        <begin position="95"/>
        <end position="97"/>
    </location>
    <ligand>
        <name>FAD</name>
        <dbReference type="ChEBI" id="CHEBI:57692"/>
        <note>ligand shared between neighboring subunits</note>
    </ligand>
</feature>
<feature type="binding site" description="in other chain" evidence="1">
    <location>
        <begin position="103"/>
        <end position="107"/>
    </location>
    <ligand>
        <name>dUMP</name>
        <dbReference type="ChEBI" id="CHEBI:246422"/>
        <note>ligand shared between dimeric partners</note>
    </ligand>
</feature>
<feature type="binding site" evidence="1">
    <location>
        <position position="103"/>
    </location>
    <ligand>
        <name>FAD</name>
        <dbReference type="ChEBI" id="CHEBI:57692"/>
        <note>ligand shared between neighboring subunits</note>
    </ligand>
</feature>
<feature type="binding site" description="in other chain" evidence="1">
    <location>
        <position position="172"/>
    </location>
    <ligand>
        <name>dUMP</name>
        <dbReference type="ChEBI" id="CHEBI:246422"/>
        <note>ligand shared between dimeric partners</note>
    </ligand>
</feature>
<feature type="binding site" evidence="1">
    <location>
        <begin position="188"/>
        <end position="190"/>
    </location>
    <ligand>
        <name>FAD</name>
        <dbReference type="ChEBI" id="CHEBI:57692"/>
        <note>ligand shared between neighboring subunits</note>
    </ligand>
</feature>
<feature type="binding site" evidence="1">
    <location>
        <position position="194"/>
    </location>
    <ligand>
        <name>FAD</name>
        <dbReference type="ChEBI" id="CHEBI:57692"/>
        <note>ligand shared between neighboring subunits</note>
    </ligand>
</feature>
<feature type="binding site" evidence="1">
    <location>
        <position position="199"/>
    </location>
    <ligand>
        <name>dUMP</name>
        <dbReference type="ChEBI" id="CHEBI:246422"/>
        <note>ligand shared between dimeric partners</note>
    </ligand>
</feature>
<protein>
    <recommendedName>
        <fullName evidence="1">Flavin-dependent thymidylate synthase</fullName>
        <shortName evidence="1">FDTS</shortName>
        <ecNumber evidence="1">2.1.1.148</ecNumber>
    </recommendedName>
    <alternativeName>
        <fullName evidence="1">FAD-dependent thymidylate synthase</fullName>
    </alternativeName>
    <alternativeName>
        <fullName evidence="1">Thymidylate synthase ThyX</fullName>
        <shortName evidence="1">TS</shortName>
        <shortName evidence="1">TSase</shortName>
    </alternativeName>
</protein>
<gene>
    <name evidence="1" type="primary">thyX</name>
    <name type="ordered locus">JTY_2764</name>
</gene>
<name>THYX_MYCBT</name>
<proteinExistence type="inferred from homology"/>
<keyword id="KW-0274">FAD</keyword>
<keyword id="KW-0285">Flavoprotein</keyword>
<keyword id="KW-0489">Methyltransferase</keyword>
<keyword id="KW-0521">NADP</keyword>
<keyword id="KW-0545">Nucleotide biosynthesis</keyword>
<keyword id="KW-0808">Transferase</keyword>
<evidence type="ECO:0000255" key="1">
    <source>
        <dbReference type="HAMAP-Rule" id="MF_01408"/>
    </source>
</evidence>
<evidence type="ECO:0000255" key="2">
    <source>
        <dbReference type="PROSITE-ProRule" id="PRU00661"/>
    </source>
</evidence>
<accession>C1AFL6</accession>
<reference key="1">
    <citation type="journal article" date="2009" name="Vaccine">
        <title>Whole genome sequence analysis of Mycobacterium bovis bacillus Calmette-Guerin (BCG) Tokyo 172: a comparative study of BCG vaccine substrains.</title>
        <authorList>
            <person name="Seki M."/>
            <person name="Honda I."/>
            <person name="Fujita I."/>
            <person name="Yano I."/>
            <person name="Yamamoto S."/>
            <person name="Koyama A."/>
        </authorList>
    </citation>
    <scope>NUCLEOTIDE SEQUENCE [LARGE SCALE GENOMIC DNA]</scope>
    <source>
        <strain>BCG / Tokyo 172 / ATCC 35737 / TMC 1019</strain>
    </source>
</reference>
<comment type="function">
    <text evidence="1">Catalyzes the reductive methylation of 2'-deoxyuridine-5'-monophosphate (dUMP) to 2'-deoxythymidine-5'-monophosphate (dTMP) while utilizing 5,10-methylenetetrahydrofolate (mTHF) as the methyl donor, and NADPH and FADH(2) as the reductant.</text>
</comment>
<comment type="catalytic activity">
    <reaction evidence="1">
        <text>dUMP + (6R)-5,10-methylene-5,6,7,8-tetrahydrofolate + NADPH + H(+) = dTMP + (6S)-5,6,7,8-tetrahydrofolate + NADP(+)</text>
        <dbReference type="Rhea" id="RHEA:29043"/>
        <dbReference type="ChEBI" id="CHEBI:15378"/>
        <dbReference type="ChEBI" id="CHEBI:15636"/>
        <dbReference type="ChEBI" id="CHEBI:57453"/>
        <dbReference type="ChEBI" id="CHEBI:57783"/>
        <dbReference type="ChEBI" id="CHEBI:58349"/>
        <dbReference type="ChEBI" id="CHEBI:63528"/>
        <dbReference type="ChEBI" id="CHEBI:246422"/>
        <dbReference type="EC" id="2.1.1.148"/>
    </reaction>
</comment>
<comment type="cofactor">
    <cofactor evidence="1">
        <name>FAD</name>
        <dbReference type="ChEBI" id="CHEBI:57692"/>
    </cofactor>
    <text evidence="1">Binds 4 FAD per tetramer. Each FAD binding site is formed by three monomers.</text>
</comment>
<comment type="pathway">
    <text evidence="1">Pyrimidine metabolism; dTTP biosynthesis.</text>
</comment>
<comment type="subunit">
    <text evidence="1">Homotetramer.</text>
</comment>
<comment type="similarity">
    <text evidence="1">Belongs to the thymidylate synthase ThyX family.</text>
</comment>